<reference key="1">
    <citation type="journal article" date="1985" name="Nucleic Acids Res.">
        <title>Characterisation of P. falciparum antigenic determinants isolated from a genomic expression library by differential antibody screening.</title>
        <authorList>
            <person name="Langsley G."/>
            <person name="Scherf A."/>
            <person name="Mercereau-Puijalon O."/>
            <person name="Koenen M."/>
            <person name="Kahane B."/>
            <person name="Mattei D."/>
            <person name="Guillotte M."/>
            <person name="Sibilli L."/>
            <person name="Garner I."/>
            <person name="Mueller-Hill B."/>
            <person name="Pereira da Silva L."/>
        </authorList>
    </citation>
    <scope>NUCLEOTIDE SEQUENCE [GENOMIC DNA]</scope>
</reference>
<protein>
    <recommendedName>
        <fullName>PPF2L antigen</fullName>
    </recommendedName>
</protein>
<proteinExistence type="predicted"/>
<organism>
    <name type="scientific">Plasmodium falciparum (isolate Palo Alto / Uganda)</name>
    <dbReference type="NCBI Taxonomy" id="57270"/>
    <lineage>
        <taxon>Eukaryota</taxon>
        <taxon>Sar</taxon>
        <taxon>Alveolata</taxon>
        <taxon>Apicomplexa</taxon>
        <taxon>Aconoidasida</taxon>
        <taxon>Haemosporida</taxon>
        <taxon>Plasmodiidae</taxon>
        <taxon>Plasmodium</taxon>
        <taxon>Plasmodium (Laverania)</taxon>
    </lineage>
</organism>
<accession>P07765</accession>
<evidence type="ECO:0000305" key="1"/>
<name>PF2L_PLAFP</name>
<comment type="miscellaneous">
    <text>This antigen is expressed in all erythrocytic forms.</text>
</comment>
<comment type="sequence caution" evidence="1">
    <conflict type="erroneous initiation">
        <sequence resource="EMBL-CDS" id="CAA26391"/>
    </conflict>
</comment>
<dbReference type="EMBL" id="X02542">
    <property type="protein sequence ID" value="CAA26391.1"/>
    <property type="status" value="ALT_INIT"/>
    <property type="molecule type" value="Genomic_DNA"/>
</dbReference>
<dbReference type="PIR" id="A23809">
    <property type="entry name" value="A23809"/>
</dbReference>
<sequence>MILKKEKKRIYILNNNIKNLNLKENVDVLNKRHKKNIIFQTDIYICSTYKGNKNIKKKSRTIIFIIKVNV</sequence>
<feature type="chain" id="PRO_0000217190" description="PPF2L antigen">
    <location>
        <begin position="1"/>
        <end position="70" status="greater than"/>
    </location>
</feature>
<feature type="non-terminal residue">
    <location>
        <position position="70"/>
    </location>
</feature>
<keyword id="KW-0461">Malaria</keyword>